<protein>
    <recommendedName>
        <fullName evidence="1">Glutamate-1-semialdehyde 2,1-aminomutase</fullName>
        <shortName evidence="1">GSA</shortName>
        <ecNumber evidence="1">5.4.3.8</ecNumber>
    </recommendedName>
    <alternativeName>
        <fullName evidence="1">Glutamate-1-semialdehyde aminotransferase</fullName>
        <shortName evidence="1">GSA-AT</shortName>
    </alternativeName>
</protein>
<sequence length="432" mass="44401">MSSTDLSAKLFADACSVIPGGVNSPVRAFSSVGGTPRFITSANGCWLTDADGNRYVDLVCSWGPMILGHAHPAVVEAVQRAAADGLSFGAPTPSEAELAREIIDRVAPVELIRLVNSGTEATMSAIRLARGFTGRAKIVKFSGCYHGHSDALLADAGSGVATLGLPSSPGVTGAAAADTIVLPYNNVPAVEEVFGRFGDEIACVITEASPGNMGTVPPLPGFNAELRRITAAHGALLILDEVMTGFRVSRAGWYGVDPVEADLFTFGKVMSGGLPAAAFGGRAEVMNRLAPLGPVYQAGTLSGNPVAMAAGLATLRAADDAAYATLDVNADRLAGLIGDALTEAGVAHQIPRAGNMFSVFFGAEPVTDFAAARATETWRFPAFFHGLLDAGVYPPPSAYECWFVSTALDDDAFDKIAAALPGAARAAAQATA</sequence>
<accession>A1T3F2</accession>
<proteinExistence type="inferred from homology"/>
<comment type="catalytic activity">
    <reaction evidence="1">
        <text>(S)-4-amino-5-oxopentanoate = 5-aminolevulinate</text>
        <dbReference type="Rhea" id="RHEA:14265"/>
        <dbReference type="ChEBI" id="CHEBI:57501"/>
        <dbReference type="ChEBI" id="CHEBI:356416"/>
        <dbReference type="EC" id="5.4.3.8"/>
    </reaction>
</comment>
<comment type="cofactor">
    <cofactor evidence="1">
        <name>pyridoxal 5'-phosphate</name>
        <dbReference type="ChEBI" id="CHEBI:597326"/>
    </cofactor>
</comment>
<comment type="pathway">
    <text evidence="1">Porphyrin-containing compound metabolism; protoporphyrin-IX biosynthesis; 5-aminolevulinate from L-glutamyl-tRNA(Glu): step 2/2.</text>
</comment>
<comment type="subunit">
    <text evidence="1">Homodimer.</text>
</comment>
<comment type="subcellular location">
    <subcellularLocation>
        <location evidence="1">Cytoplasm</location>
    </subcellularLocation>
</comment>
<comment type="similarity">
    <text evidence="1">Belongs to the class-III pyridoxal-phosphate-dependent aminotransferase family. HemL subfamily.</text>
</comment>
<keyword id="KW-0963">Cytoplasm</keyword>
<keyword id="KW-0413">Isomerase</keyword>
<keyword id="KW-0627">Porphyrin biosynthesis</keyword>
<keyword id="KW-0663">Pyridoxal phosphate</keyword>
<feature type="chain" id="PRO_0000382350" description="Glutamate-1-semialdehyde 2,1-aminomutase">
    <location>
        <begin position="1"/>
        <end position="432"/>
    </location>
</feature>
<feature type="modified residue" description="N6-(pyridoxal phosphate)lysine" evidence="1">
    <location>
        <position position="268"/>
    </location>
</feature>
<dbReference type="EC" id="5.4.3.8" evidence="1"/>
<dbReference type="EMBL" id="CP000511">
    <property type="protein sequence ID" value="ABM11702.1"/>
    <property type="molecule type" value="Genomic_DNA"/>
</dbReference>
<dbReference type="RefSeq" id="WP_011778137.1">
    <property type="nucleotide sequence ID" value="NC_008726.1"/>
</dbReference>
<dbReference type="SMR" id="A1T3F2"/>
<dbReference type="STRING" id="350058.Mvan_0864"/>
<dbReference type="KEGG" id="mva:Mvan_0864"/>
<dbReference type="eggNOG" id="COG0001">
    <property type="taxonomic scope" value="Bacteria"/>
</dbReference>
<dbReference type="HOGENOM" id="CLU_016922_1_5_11"/>
<dbReference type="UniPathway" id="UPA00251">
    <property type="reaction ID" value="UER00317"/>
</dbReference>
<dbReference type="Proteomes" id="UP000009159">
    <property type="component" value="Chromosome"/>
</dbReference>
<dbReference type="GO" id="GO:0005737">
    <property type="term" value="C:cytoplasm"/>
    <property type="evidence" value="ECO:0007669"/>
    <property type="project" value="UniProtKB-SubCell"/>
</dbReference>
<dbReference type="GO" id="GO:0042286">
    <property type="term" value="F:glutamate-1-semialdehyde 2,1-aminomutase activity"/>
    <property type="evidence" value="ECO:0007669"/>
    <property type="project" value="UniProtKB-UniRule"/>
</dbReference>
<dbReference type="GO" id="GO:0030170">
    <property type="term" value="F:pyridoxal phosphate binding"/>
    <property type="evidence" value="ECO:0007669"/>
    <property type="project" value="InterPro"/>
</dbReference>
<dbReference type="GO" id="GO:0008483">
    <property type="term" value="F:transaminase activity"/>
    <property type="evidence" value="ECO:0007669"/>
    <property type="project" value="InterPro"/>
</dbReference>
<dbReference type="GO" id="GO:0006782">
    <property type="term" value="P:protoporphyrinogen IX biosynthetic process"/>
    <property type="evidence" value="ECO:0007669"/>
    <property type="project" value="UniProtKB-UniRule"/>
</dbReference>
<dbReference type="CDD" id="cd00610">
    <property type="entry name" value="OAT_like"/>
    <property type="match status" value="1"/>
</dbReference>
<dbReference type="FunFam" id="3.40.640.10:FF:000021">
    <property type="entry name" value="Glutamate-1-semialdehyde 2,1-aminomutase"/>
    <property type="match status" value="1"/>
</dbReference>
<dbReference type="Gene3D" id="3.90.1150.10">
    <property type="entry name" value="Aspartate Aminotransferase, domain 1"/>
    <property type="match status" value="1"/>
</dbReference>
<dbReference type="Gene3D" id="3.40.640.10">
    <property type="entry name" value="Type I PLP-dependent aspartate aminotransferase-like (Major domain)"/>
    <property type="match status" value="1"/>
</dbReference>
<dbReference type="HAMAP" id="MF_00375">
    <property type="entry name" value="HemL_aminotrans_3"/>
    <property type="match status" value="1"/>
</dbReference>
<dbReference type="InterPro" id="IPR004639">
    <property type="entry name" value="4pyrrol_synth_GluAld_NH2Trfase"/>
</dbReference>
<dbReference type="InterPro" id="IPR005814">
    <property type="entry name" value="Aminotrans_3"/>
</dbReference>
<dbReference type="InterPro" id="IPR049704">
    <property type="entry name" value="Aminotrans_3_PPA_site"/>
</dbReference>
<dbReference type="InterPro" id="IPR015424">
    <property type="entry name" value="PyrdxlP-dep_Trfase"/>
</dbReference>
<dbReference type="InterPro" id="IPR015421">
    <property type="entry name" value="PyrdxlP-dep_Trfase_major"/>
</dbReference>
<dbReference type="InterPro" id="IPR015422">
    <property type="entry name" value="PyrdxlP-dep_Trfase_small"/>
</dbReference>
<dbReference type="NCBIfam" id="TIGR00713">
    <property type="entry name" value="hemL"/>
    <property type="match status" value="1"/>
</dbReference>
<dbReference type="NCBIfam" id="NF000818">
    <property type="entry name" value="PRK00062.1"/>
    <property type="match status" value="1"/>
</dbReference>
<dbReference type="PANTHER" id="PTHR43713">
    <property type="entry name" value="GLUTAMATE-1-SEMIALDEHYDE 2,1-AMINOMUTASE"/>
    <property type="match status" value="1"/>
</dbReference>
<dbReference type="PANTHER" id="PTHR43713:SF3">
    <property type="entry name" value="GLUTAMATE-1-SEMIALDEHYDE 2,1-AMINOMUTASE 1, CHLOROPLASTIC-RELATED"/>
    <property type="match status" value="1"/>
</dbReference>
<dbReference type="Pfam" id="PF00202">
    <property type="entry name" value="Aminotran_3"/>
    <property type="match status" value="1"/>
</dbReference>
<dbReference type="SUPFAM" id="SSF53383">
    <property type="entry name" value="PLP-dependent transferases"/>
    <property type="match status" value="1"/>
</dbReference>
<dbReference type="PROSITE" id="PS00600">
    <property type="entry name" value="AA_TRANSFER_CLASS_3"/>
    <property type="match status" value="1"/>
</dbReference>
<reference key="1">
    <citation type="submission" date="2006-12" db="EMBL/GenBank/DDBJ databases">
        <title>Complete sequence of Mycobacterium vanbaalenii PYR-1.</title>
        <authorList>
            <consortium name="US DOE Joint Genome Institute"/>
            <person name="Copeland A."/>
            <person name="Lucas S."/>
            <person name="Lapidus A."/>
            <person name="Barry K."/>
            <person name="Detter J.C."/>
            <person name="Glavina del Rio T."/>
            <person name="Hammon N."/>
            <person name="Israni S."/>
            <person name="Dalin E."/>
            <person name="Tice H."/>
            <person name="Pitluck S."/>
            <person name="Singan V."/>
            <person name="Schmutz J."/>
            <person name="Larimer F."/>
            <person name="Land M."/>
            <person name="Hauser L."/>
            <person name="Kyrpides N."/>
            <person name="Anderson I.J."/>
            <person name="Miller C."/>
            <person name="Richardson P."/>
        </authorList>
    </citation>
    <scope>NUCLEOTIDE SEQUENCE [LARGE SCALE GENOMIC DNA]</scope>
    <source>
        <strain>DSM 7251 / JCM 13017 / BCRC 16820 / KCTC 9966 / NRRL B-24157 / PYR-1</strain>
    </source>
</reference>
<evidence type="ECO:0000255" key="1">
    <source>
        <dbReference type="HAMAP-Rule" id="MF_00375"/>
    </source>
</evidence>
<name>GSA_MYCVP</name>
<gene>
    <name evidence="1" type="primary">hemL</name>
    <name type="ordered locus">Mvan_0864</name>
</gene>
<organism>
    <name type="scientific">Mycolicibacterium vanbaalenii (strain DSM 7251 / JCM 13017 / BCRC 16820 / KCTC 9966 / NRRL B-24157 / PYR-1)</name>
    <name type="common">Mycobacterium vanbaalenii</name>
    <dbReference type="NCBI Taxonomy" id="350058"/>
    <lineage>
        <taxon>Bacteria</taxon>
        <taxon>Bacillati</taxon>
        <taxon>Actinomycetota</taxon>
        <taxon>Actinomycetes</taxon>
        <taxon>Mycobacteriales</taxon>
        <taxon>Mycobacteriaceae</taxon>
        <taxon>Mycolicibacterium</taxon>
    </lineage>
</organism>